<proteinExistence type="inferred from homology"/>
<evidence type="ECO:0000305" key="1"/>
<accession>O17606</accession>
<dbReference type="EMBL" id="Z81042">
    <property type="protein sequence ID" value="CAB02797.1"/>
    <property type="molecule type" value="Genomic_DNA"/>
</dbReference>
<dbReference type="EMBL" id="Z83113">
    <property type="protein sequence ID" value="CAB02797.1"/>
    <property type="status" value="JOINED"/>
    <property type="molecule type" value="Genomic_DNA"/>
</dbReference>
<dbReference type="PIR" id="T19538">
    <property type="entry name" value="T19538"/>
</dbReference>
<dbReference type="RefSeq" id="NP_741610.1">
    <property type="nucleotide sequence ID" value="NM_171524.5"/>
</dbReference>
<dbReference type="BioGRID" id="44425">
    <property type="interactions" value="4"/>
</dbReference>
<dbReference type="FunCoup" id="O17606">
    <property type="interactions" value="3186"/>
</dbReference>
<dbReference type="STRING" id="6239.C27H6.8.1"/>
<dbReference type="iPTMnet" id="O17606"/>
<dbReference type="PaxDb" id="6239-C27H6.8"/>
<dbReference type="PeptideAtlas" id="O17606"/>
<dbReference type="EnsemblMetazoa" id="C27H6.8.1">
    <property type="protein sequence ID" value="C27H6.8.1"/>
    <property type="gene ID" value="WBGene00007787"/>
</dbReference>
<dbReference type="GeneID" id="179392"/>
<dbReference type="KEGG" id="cel:CELE_C27H6.8"/>
<dbReference type="UCSC" id="C27H6.8.1">
    <property type="organism name" value="c. elegans"/>
</dbReference>
<dbReference type="AGR" id="WB:WBGene00007787"/>
<dbReference type="CTD" id="179392"/>
<dbReference type="WormBase" id="C27H6.8">
    <property type="protein sequence ID" value="CE18880"/>
    <property type="gene ID" value="WBGene00007787"/>
</dbReference>
<dbReference type="eggNOG" id="KOG2948">
    <property type="taxonomic scope" value="Eukaryota"/>
</dbReference>
<dbReference type="GeneTree" id="ENSGT00390000010265"/>
<dbReference type="HOGENOM" id="CLU_051576_0_0_1"/>
<dbReference type="InParanoid" id="O17606"/>
<dbReference type="OMA" id="FHCDEVV"/>
<dbReference type="OrthoDB" id="10265310at2759"/>
<dbReference type="PhylomeDB" id="O17606"/>
<dbReference type="PRO" id="PR:O17606"/>
<dbReference type="Proteomes" id="UP000001940">
    <property type="component" value="Chromosome V"/>
</dbReference>
<dbReference type="Bgee" id="WBGene00007787">
    <property type="expression patterns" value="Expressed in adult organism and 4 other cell types or tissues"/>
</dbReference>
<dbReference type="GO" id="GO:0005737">
    <property type="term" value="C:cytoplasm"/>
    <property type="evidence" value="ECO:0000318"/>
    <property type="project" value="GO_Central"/>
</dbReference>
<dbReference type="GO" id="GO:0005634">
    <property type="term" value="C:nucleus"/>
    <property type="evidence" value="ECO:0000318"/>
    <property type="project" value="GO_Central"/>
</dbReference>
<dbReference type="InterPro" id="IPR003226">
    <property type="entry name" value="MYG1_exonuclease"/>
</dbReference>
<dbReference type="PANTHER" id="PTHR11215">
    <property type="entry name" value="METAL DEPENDENT HYDROLASE - RELATED"/>
    <property type="match status" value="1"/>
</dbReference>
<dbReference type="PANTHER" id="PTHR11215:SF1">
    <property type="entry name" value="MYG1 EXONUCLEASE"/>
    <property type="match status" value="1"/>
</dbReference>
<dbReference type="Pfam" id="PF03690">
    <property type="entry name" value="MYG1_exonuc"/>
    <property type="match status" value="1"/>
</dbReference>
<gene>
    <name type="ORF">C27H6.8</name>
    <name type="ORF">K08H10.8</name>
</gene>
<keyword id="KW-1185">Reference proteome</keyword>
<reference key="1">
    <citation type="journal article" date="1998" name="Science">
        <title>Genome sequence of the nematode C. elegans: a platform for investigating biology.</title>
        <authorList>
            <consortium name="The C. elegans sequencing consortium"/>
        </authorList>
    </citation>
    <scope>NUCLEOTIDE SEQUENCE [LARGE SCALE GENOMIC DNA]</scope>
    <source>
        <strain>Bristol N2</strain>
    </source>
</reference>
<protein>
    <recommendedName>
        <fullName>MYG1 protein C27H6.8</fullName>
    </recommendedName>
</protein>
<organism>
    <name type="scientific">Caenorhabditis elegans</name>
    <dbReference type="NCBI Taxonomy" id="6239"/>
    <lineage>
        <taxon>Eukaryota</taxon>
        <taxon>Metazoa</taxon>
        <taxon>Ecdysozoa</taxon>
        <taxon>Nematoda</taxon>
        <taxon>Chromadorea</taxon>
        <taxon>Rhabditida</taxon>
        <taxon>Rhabditina</taxon>
        <taxon>Rhabditomorpha</taxon>
        <taxon>Rhabditoidea</taxon>
        <taxon>Rhabditidae</taxon>
        <taxon>Peloderinae</taxon>
        <taxon>Caenorhabditis</taxon>
    </lineage>
</organism>
<name>YK4P_CAEEL</name>
<comment type="similarity">
    <text evidence="1">Belongs to the MYG1 family.</text>
</comment>
<feature type="chain" id="PRO_0000213485" description="MYG1 protein C27H6.8">
    <location>
        <begin position="1"/>
        <end position="340"/>
    </location>
</feature>
<sequence length="340" mass="38464">MTSLIGTHSGKFHCDEAFACFMLKQLPQFKDHSILRTRDAAQLEKCDIIVDVGGIFDHSKQRYDHHQRGFTDTMRTLEKLNFDTKLSSAGLVYAHYGREVINQILGGNVSSSMIDLFYHRLYEQFVESIDAIDNGISQYDGVPRYHSSGNLSSRTGQFNSHWNEPENDADERFQQAMQFIGEEFSRSVKYLANVWWPAREIIEAAVDKRFEIDASGRIILIENGGCPWKEHFFDIEVEKNIADDNITYILFSDSTNASWRVQAIPVDKMSSFENRMPLPAAWRGLRDDDLSKESGIPGGVFVHISGFIGGNLTREGAIAMARKALEIGEENPVKKAKLGN</sequence>